<reference key="1">
    <citation type="journal article" date="2003" name="Nat. Genet.">
        <title>Comparative analysis of the genome sequences of Bordetella pertussis, Bordetella parapertussis and Bordetella bronchiseptica.</title>
        <authorList>
            <person name="Parkhill J."/>
            <person name="Sebaihia M."/>
            <person name="Preston A."/>
            <person name="Murphy L.D."/>
            <person name="Thomson N.R."/>
            <person name="Harris D.E."/>
            <person name="Holden M.T.G."/>
            <person name="Churcher C.M."/>
            <person name="Bentley S.D."/>
            <person name="Mungall K.L."/>
            <person name="Cerdeno-Tarraga A.-M."/>
            <person name="Temple L."/>
            <person name="James K.D."/>
            <person name="Harris B."/>
            <person name="Quail M.A."/>
            <person name="Achtman M."/>
            <person name="Atkin R."/>
            <person name="Baker S."/>
            <person name="Basham D."/>
            <person name="Bason N."/>
            <person name="Cherevach I."/>
            <person name="Chillingworth T."/>
            <person name="Collins M."/>
            <person name="Cronin A."/>
            <person name="Davis P."/>
            <person name="Doggett J."/>
            <person name="Feltwell T."/>
            <person name="Goble A."/>
            <person name="Hamlin N."/>
            <person name="Hauser H."/>
            <person name="Holroyd S."/>
            <person name="Jagels K."/>
            <person name="Leather S."/>
            <person name="Moule S."/>
            <person name="Norberczak H."/>
            <person name="O'Neil S."/>
            <person name="Ormond D."/>
            <person name="Price C."/>
            <person name="Rabbinowitsch E."/>
            <person name="Rutter S."/>
            <person name="Sanders M."/>
            <person name="Saunders D."/>
            <person name="Seeger K."/>
            <person name="Sharp S."/>
            <person name="Simmonds M."/>
            <person name="Skelton J."/>
            <person name="Squares R."/>
            <person name="Squares S."/>
            <person name="Stevens K."/>
            <person name="Unwin L."/>
            <person name="Whitehead S."/>
            <person name="Barrell B.G."/>
            <person name="Maskell D.J."/>
        </authorList>
    </citation>
    <scope>NUCLEOTIDE SEQUENCE [LARGE SCALE GENOMIC DNA]</scope>
    <source>
        <strain>ATCC BAA-588 / NCTC 13252 / RB50</strain>
    </source>
</reference>
<organism>
    <name type="scientific">Bordetella bronchiseptica (strain ATCC BAA-588 / NCTC 13252 / RB50)</name>
    <name type="common">Alcaligenes bronchisepticus</name>
    <dbReference type="NCBI Taxonomy" id="257310"/>
    <lineage>
        <taxon>Bacteria</taxon>
        <taxon>Pseudomonadati</taxon>
        <taxon>Pseudomonadota</taxon>
        <taxon>Betaproteobacteria</taxon>
        <taxon>Burkholderiales</taxon>
        <taxon>Alcaligenaceae</taxon>
        <taxon>Bordetella</taxon>
    </lineage>
</organism>
<feature type="chain" id="PRO_0000140557" description="Chorismate synthase">
    <location>
        <begin position="1"/>
        <end position="353"/>
    </location>
</feature>
<feature type="binding site" evidence="1">
    <location>
        <position position="48"/>
    </location>
    <ligand>
        <name>NADP(+)</name>
        <dbReference type="ChEBI" id="CHEBI:58349"/>
    </ligand>
</feature>
<feature type="binding site" evidence="1">
    <location>
        <position position="54"/>
    </location>
    <ligand>
        <name>NADP(+)</name>
        <dbReference type="ChEBI" id="CHEBI:58349"/>
    </ligand>
</feature>
<feature type="binding site" evidence="1">
    <location>
        <begin position="125"/>
        <end position="127"/>
    </location>
    <ligand>
        <name>FMN</name>
        <dbReference type="ChEBI" id="CHEBI:58210"/>
    </ligand>
</feature>
<feature type="binding site" evidence="1">
    <location>
        <begin position="238"/>
        <end position="239"/>
    </location>
    <ligand>
        <name>FMN</name>
        <dbReference type="ChEBI" id="CHEBI:58210"/>
    </ligand>
</feature>
<feature type="binding site" evidence="1">
    <location>
        <position position="278"/>
    </location>
    <ligand>
        <name>FMN</name>
        <dbReference type="ChEBI" id="CHEBI:58210"/>
    </ligand>
</feature>
<feature type="binding site" evidence="1">
    <location>
        <begin position="293"/>
        <end position="297"/>
    </location>
    <ligand>
        <name>FMN</name>
        <dbReference type="ChEBI" id="CHEBI:58210"/>
    </ligand>
</feature>
<feature type="binding site" evidence="1">
    <location>
        <position position="319"/>
    </location>
    <ligand>
        <name>FMN</name>
        <dbReference type="ChEBI" id="CHEBI:58210"/>
    </ligand>
</feature>
<keyword id="KW-0028">Amino-acid biosynthesis</keyword>
<keyword id="KW-0057">Aromatic amino acid biosynthesis</keyword>
<keyword id="KW-0274">FAD</keyword>
<keyword id="KW-0285">Flavoprotein</keyword>
<keyword id="KW-0288">FMN</keyword>
<keyword id="KW-0456">Lyase</keyword>
<keyword id="KW-0521">NADP</keyword>
<dbReference type="EC" id="4.2.3.5" evidence="1"/>
<dbReference type="EMBL" id="BX640443">
    <property type="protein sequence ID" value="CAE32607.1"/>
    <property type="molecule type" value="Genomic_DNA"/>
</dbReference>
<dbReference type="RefSeq" id="WP_003812688.1">
    <property type="nucleotide sequence ID" value="NC_002927.3"/>
</dbReference>
<dbReference type="SMR" id="Q7WKJ5"/>
<dbReference type="GeneID" id="56478284"/>
<dbReference type="KEGG" id="bbr:BB2111"/>
<dbReference type="eggNOG" id="COG0082">
    <property type="taxonomic scope" value="Bacteria"/>
</dbReference>
<dbReference type="HOGENOM" id="CLU_034547_0_2_4"/>
<dbReference type="UniPathway" id="UPA00053">
    <property type="reaction ID" value="UER00090"/>
</dbReference>
<dbReference type="Proteomes" id="UP000001027">
    <property type="component" value="Chromosome"/>
</dbReference>
<dbReference type="GO" id="GO:0005829">
    <property type="term" value="C:cytosol"/>
    <property type="evidence" value="ECO:0007669"/>
    <property type="project" value="TreeGrafter"/>
</dbReference>
<dbReference type="GO" id="GO:0004107">
    <property type="term" value="F:chorismate synthase activity"/>
    <property type="evidence" value="ECO:0007669"/>
    <property type="project" value="UniProtKB-UniRule"/>
</dbReference>
<dbReference type="GO" id="GO:0010181">
    <property type="term" value="F:FMN binding"/>
    <property type="evidence" value="ECO:0007669"/>
    <property type="project" value="TreeGrafter"/>
</dbReference>
<dbReference type="GO" id="GO:0008652">
    <property type="term" value="P:amino acid biosynthetic process"/>
    <property type="evidence" value="ECO:0007669"/>
    <property type="project" value="UniProtKB-KW"/>
</dbReference>
<dbReference type="GO" id="GO:0009073">
    <property type="term" value="P:aromatic amino acid family biosynthetic process"/>
    <property type="evidence" value="ECO:0007669"/>
    <property type="project" value="UniProtKB-KW"/>
</dbReference>
<dbReference type="GO" id="GO:0009423">
    <property type="term" value="P:chorismate biosynthetic process"/>
    <property type="evidence" value="ECO:0007669"/>
    <property type="project" value="UniProtKB-UniRule"/>
</dbReference>
<dbReference type="CDD" id="cd07304">
    <property type="entry name" value="Chorismate_synthase"/>
    <property type="match status" value="1"/>
</dbReference>
<dbReference type="FunFam" id="3.60.150.10:FF:000001">
    <property type="entry name" value="Chorismate synthase"/>
    <property type="match status" value="1"/>
</dbReference>
<dbReference type="Gene3D" id="3.60.150.10">
    <property type="entry name" value="Chorismate synthase AroC"/>
    <property type="match status" value="1"/>
</dbReference>
<dbReference type="HAMAP" id="MF_00300">
    <property type="entry name" value="Chorismate_synth"/>
    <property type="match status" value="1"/>
</dbReference>
<dbReference type="InterPro" id="IPR000453">
    <property type="entry name" value="Chorismate_synth"/>
</dbReference>
<dbReference type="InterPro" id="IPR035904">
    <property type="entry name" value="Chorismate_synth_AroC_sf"/>
</dbReference>
<dbReference type="InterPro" id="IPR020541">
    <property type="entry name" value="Chorismate_synthase_CS"/>
</dbReference>
<dbReference type="NCBIfam" id="TIGR00033">
    <property type="entry name" value="aroC"/>
    <property type="match status" value="1"/>
</dbReference>
<dbReference type="NCBIfam" id="NF003793">
    <property type="entry name" value="PRK05382.1"/>
    <property type="match status" value="1"/>
</dbReference>
<dbReference type="PANTHER" id="PTHR21085">
    <property type="entry name" value="CHORISMATE SYNTHASE"/>
    <property type="match status" value="1"/>
</dbReference>
<dbReference type="PANTHER" id="PTHR21085:SF0">
    <property type="entry name" value="CHORISMATE SYNTHASE"/>
    <property type="match status" value="1"/>
</dbReference>
<dbReference type="Pfam" id="PF01264">
    <property type="entry name" value="Chorismate_synt"/>
    <property type="match status" value="1"/>
</dbReference>
<dbReference type="PIRSF" id="PIRSF001456">
    <property type="entry name" value="Chorismate_synth"/>
    <property type="match status" value="1"/>
</dbReference>
<dbReference type="SUPFAM" id="SSF103263">
    <property type="entry name" value="Chorismate synthase, AroC"/>
    <property type="match status" value="1"/>
</dbReference>
<dbReference type="PROSITE" id="PS00787">
    <property type="entry name" value="CHORISMATE_SYNTHASE_1"/>
    <property type="match status" value="1"/>
</dbReference>
<dbReference type="PROSITE" id="PS00788">
    <property type="entry name" value="CHORISMATE_SYNTHASE_2"/>
    <property type="match status" value="1"/>
</dbReference>
<dbReference type="PROSITE" id="PS00789">
    <property type="entry name" value="CHORISMATE_SYNTHASE_3"/>
    <property type="match status" value="1"/>
</dbReference>
<accession>Q7WKJ5</accession>
<proteinExistence type="inferred from homology"/>
<sequence>MSGNTLGTLFCVTNFGESHGPAIGCVVDGCPPGLPLEAADIQAELDRRRPGTSRHVTQRQEADQVEILSGVYEGVTTGTPIGLLIRNTDARSKDYSNIADTFRPGHADFAYWRKYGVRDPRGGGRSSARLTAPTVAAGAIAKKWLAGQFGVRVRGYMSQLGPIAIPFSSWDDVPGNAFYAPNAAVVPELEAYMDQLRRDGDSVGARIEVVAEGLPAGWGEPIYDRLDADIAHAMMGLNAVKGVSLGAGFESIAQRGSEHGDEITPEGFASNHAGGVLGGISTGQPITVSLAIKPTSSIRVERRSVNRAGEPVMVQTLGRHDPCVGIRATPIAEALLALVLIDHALRQRAQCGG</sequence>
<gene>
    <name evidence="1" type="primary">aroC</name>
    <name type="ordered locus">BB2111</name>
</gene>
<name>AROC_BORBR</name>
<comment type="function">
    <text evidence="1">Catalyzes the anti-1,4-elimination of the C-3 phosphate and the C-6 proR hydrogen from 5-enolpyruvylshikimate-3-phosphate (EPSP) to yield chorismate, which is the branch point compound that serves as the starting substrate for the three terminal pathways of aromatic amino acid biosynthesis. This reaction introduces a second double bond into the aromatic ring system.</text>
</comment>
<comment type="catalytic activity">
    <reaction evidence="1">
        <text>5-O-(1-carboxyvinyl)-3-phosphoshikimate = chorismate + phosphate</text>
        <dbReference type="Rhea" id="RHEA:21020"/>
        <dbReference type="ChEBI" id="CHEBI:29748"/>
        <dbReference type="ChEBI" id="CHEBI:43474"/>
        <dbReference type="ChEBI" id="CHEBI:57701"/>
        <dbReference type="EC" id="4.2.3.5"/>
    </reaction>
</comment>
<comment type="cofactor">
    <cofactor evidence="1">
        <name>FMNH2</name>
        <dbReference type="ChEBI" id="CHEBI:57618"/>
    </cofactor>
    <text evidence="1">Reduced FMN (FMNH(2)).</text>
</comment>
<comment type="pathway">
    <text evidence="1">Metabolic intermediate biosynthesis; chorismate biosynthesis; chorismate from D-erythrose 4-phosphate and phosphoenolpyruvate: step 7/7.</text>
</comment>
<comment type="subunit">
    <text evidence="1">Homotetramer.</text>
</comment>
<comment type="similarity">
    <text evidence="1">Belongs to the chorismate synthase family.</text>
</comment>
<protein>
    <recommendedName>
        <fullName evidence="1">Chorismate synthase</fullName>
        <shortName evidence="1">CS</shortName>
        <ecNumber evidence="1">4.2.3.5</ecNumber>
    </recommendedName>
    <alternativeName>
        <fullName evidence="1">5-enolpyruvylshikimate-3-phosphate phospholyase</fullName>
    </alternativeName>
</protein>
<evidence type="ECO:0000255" key="1">
    <source>
        <dbReference type="HAMAP-Rule" id="MF_00300"/>
    </source>
</evidence>